<accession>Q8A465</accession>
<reference key="1">
    <citation type="journal article" date="2003" name="Science">
        <title>A genomic view of the human-Bacteroides thetaiotaomicron symbiosis.</title>
        <authorList>
            <person name="Xu J."/>
            <person name="Bjursell M.K."/>
            <person name="Himrod J."/>
            <person name="Deng S."/>
            <person name="Carmichael L.K."/>
            <person name="Chiang H.C."/>
            <person name="Hooper L.V."/>
            <person name="Gordon J.I."/>
        </authorList>
    </citation>
    <scope>NUCLEOTIDE SEQUENCE [LARGE SCALE GENOMIC DNA]</scope>
    <source>
        <strain>ATCC 29148 / DSM 2079 / JCM 5827 / CCUG 10774 / NCTC 10582 / VPI-5482 / E50</strain>
    </source>
</reference>
<protein>
    <recommendedName>
        <fullName evidence="1">Large ribosomal subunit protein uL11</fullName>
    </recommendedName>
    <alternativeName>
        <fullName evidence="2">50S ribosomal protein L11</fullName>
    </alternativeName>
</protein>
<sequence>MAKEVAGLIKLQIKGGAANPSPPVGPALGSKGINIMEFCKQFNARTQDKAGKILPVIITYYADKSFDFVIKTPPVAIQLLEVAKVKSGSAEPNRKKVAELTWEQIRTIAQDKMVDLNCFTVDAAMRMVAGTARSMGIAVKGEFPVNN</sequence>
<comment type="function">
    <text evidence="1">Forms part of the ribosomal stalk which helps the ribosome interact with GTP-bound translation factors.</text>
</comment>
<comment type="subunit">
    <text evidence="1">Part of the ribosomal stalk of the 50S ribosomal subunit. Interacts with L10 and the large rRNA to form the base of the stalk. L10 forms an elongated spine to which L12 dimers bind in a sequential fashion forming a multimeric L10(L12)X complex.</text>
</comment>
<comment type="PTM">
    <text evidence="1">One or more lysine residues are methylated.</text>
</comment>
<comment type="similarity">
    <text evidence="1">Belongs to the universal ribosomal protein uL11 family.</text>
</comment>
<name>RL11_BACTN</name>
<gene>
    <name evidence="1" type="primary">rplK</name>
    <name type="ordered locus">BT_2738</name>
</gene>
<organism>
    <name type="scientific">Bacteroides thetaiotaomicron (strain ATCC 29148 / DSM 2079 / JCM 5827 / CCUG 10774 / NCTC 10582 / VPI-5482 / E50)</name>
    <dbReference type="NCBI Taxonomy" id="226186"/>
    <lineage>
        <taxon>Bacteria</taxon>
        <taxon>Pseudomonadati</taxon>
        <taxon>Bacteroidota</taxon>
        <taxon>Bacteroidia</taxon>
        <taxon>Bacteroidales</taxon>
        <taxon>Bacteroidaceae</taxon>
        <taxon>Bacteroides</taxon>
    </lineage>
</organism>
<keyword id="KW-0488">Methylation</keyword>
<keyword id="KW-1185">Reference proteome</keyword>
<keyword id="KW-0687">Ribonucleoprotein</keyword>
<keyword id="KW-0689">Ribosomal protein</keyword>
<keyword id="KW-0694">RNA-binding</keyword>
<keyword id="KW-0699">rRNA-binding</keyword>
<proteinExistence type="inferred from homology"/>
<dbReference type="EMBL" id="AE015928">
    <property type="protein sequence ID" value="AAO77844.1"/>
    <property type="molecule type" value="Genomic_DNA"/>
</dbReference>
<dbReference type="RefSeq" id="NP_811650.1">
    <property type="nucleotide sequence ID" value="NC_004663.1"/>
</dbReference>
<dbReference type="RefSeq" id="WP_008762027.1">
    <property type="nucleotide sequence ID" value="NZ_UYXG01000001.1"/>
</dbReference>
<dbReference type="SMR" id="Q8A465"/>
<dbReference type="FunCoup" id="Q8A465">
    <property type="interactions" value="614"/>
</dbReference>
<dbReference type="STRING" id="226186.BT_2738"/>
<dbReference type="PaxDb" id="226186-BT_2738"/>
<dbReference type="EnsemblBacteria" id="AAO77844">
    <property type="protein sequence ID" value="AAO77844"/>
    <property type="gene ID" value="BT_2738"/>
</dbReference>
<dbReference type="GeneID" id="69587598"/>
<dbReference type="KEGG" id="bth:BT_2738"/>
<dbReference type="PATRIC" id="fig|226186.12.peg.2781"/>
<dbReference type="eggNOG" id="COG0080">
    <property type="taxonomic scope" value="Bacteria"/>
</dbReference>
<dbReference type="HOGENOM" id="CLU_074237_2_1_10"/>
<dbReference type="InParanoid" id="Q8A465"/>
<dbReference type="OrthoDB" id="9802408at2"/>
<dbReference type="Proteomes" id="UP000001414">
    <property type="component" value="Chromosome"/>
</dbReference>
<dbReference type="GO" id="GO:0022625">
    <property type="term" value="C:cytosolic large ribosomal subunit"/>
    <property type="evidence" value="ECO:0000318"/>
    <property type="project" value="GO_Central"/>
</dbReference>
<dbReference type="GO" id="GO:0070180">
    <property type="term" value="F:large ribosomal subunit rRNA binding"/>
    <property type="evidence" value="ECO:0000318"/>
    <property type="project" value="GO_Central"/>
</dbReference>
<dbReference type="GO" id="GO:0003735">
    <property type="term" value="F:structural constituent of ribosome"/>
    <property type="evidence" value="ECO:0000318"/>
    <property type="project" value="GO_Central"/>
</dbReference>
<dbReference type="GO" id="GO:0006412">
    <property type="term" value="P:translation"/>
    <property type="evidence" value="ECO:0000318"/>
    <property type="project" value="GO_Central"/>
</dbReference>
<dbReference type="CDD" id="cd00349">
    <property type="entry name" value="Ribosomal_L11"/>
    <property type="match status" value="1"/>
</dbReference>
<dbReference type="FunFam" id="1.10.10.250:FF:000001">
    <property type="entry name" value="50S ribosomal protein L11"/>
    <property type="match status" value="1"/>
</dbReference>
<dbReference type="FunFam" id="3.30.1550.10:FF:000001">
    <property type="entry name" value="50S ribosomal protein L11"/>
    <property type="match status" value="1"/>
</dbReference>
<dbReference type="Gene3D" id="1.10.10.250">
    <property type="entry name" value="Ribosomal protein L11, C-terminal domain"/>
    <property type="match status" value="1"/>
</dbReference>
<dbReference type="Gene3D" id="3.30.1550.10">
    <property type="entry name" value="Ribosomal protein L11/L12, N-terminal domain"/>
    <property type="match status" value="1"/>
</dbReference>
<dbReference type="HAMAP" id="MF_00736">
    <property type="entry name" value="Ribosomal_uL11"/>
    <property type="match status" value="1"/>
</dbReference>
<dbReference type="InterPro" id="IPR000911">
    <property type="entry name" value="Ribosomal_uL11"/>
</dbReference>
<dbReference type="InterPro" id="IPR006519">
    <property type="entry name" value="Ribosomal_uL11_bac-typ"/>
</dbReference>
<dbReference type="InterPro" id="IPR020783">
    <property type="entry name" value="Ribosomal_uL11_C"/>
</dbReference>
<dbReference type="InterPro" id="IPR036769">
    <property type="entry name" value="Ribosomal_uL11_C_sf"/>
</dbReference>
<dbReference type="InterPro" id="IPR020785">
    <property type="entry name" value="Ribosomal_uL11_CS"/>
</dbReference>
<dbReference type="InterPro" id="IPR020784">
    <property type="entry name" value="Ribosomal_uL11_N"/>
</dbReference>
<dbReference type="InterPro" id="IPR036796">
    <property type="entry name" value="Ribosomal_uL11_N_sf"/>
</dbReference>
<dbReference type="NCBIfam" id="TIGR01632">
    <property type="entry name" value="L11_bact"/>
    <property type="match status" value="1"/>
</dbReference>
<dbReference type="PANTHER" id="PTHR11661">
    <property type="entry name" value="60S RIBOSOMAL PROTEIN L12"/>
    <property type="match status" value="1"/>
</dbReference>
<dbReference type="PANTHER" id="PTHR11661:SF1">
    <property type="entry name" value="LARGE RIBOSOMAL SUBUNIT PROTEIN UL11M"/>
    <property type="match status" value="1"/>
</dbReference>
<dbReference type="Pfam" id="PF00298">
    <property type="entry name" value="Ribosomal_L11"/>
    <property type="match status" value="1"/>
</dbReference>
<dbReference type="Pfam" id="PF03946">
    <property type="entry name" value="Ribosomal_L11_N"/>
    <property type="match status" value="1"/>
</dbReference>
<dbReference type="SMART" id="SM00649">
    <property type="entry name" value="RL11"/>
    <property type="match status" value="1"/>
</dbReference>
<dbReference type="SUPFAM" id="SSF54747">
    <property type="entry name" value="Ribosomal L11/L12e N-terminal domain"/>
    <property type="match status" value="1"/>
</dbReference>
<dbReference type="SUPFAM" id="SSF46906">
    <property type="entry name" value="Ribosomal protein L11, C-terminal domain"/>
    <property type="match status" value="1"/>
</dbReference>
<dbReference type="PROSITE" id="PS00359">
    <property type="entry name" value="RIBOSOMAL_L11"/>
    <property type="match status" value="1"/>
</dbReference>
<evidence type="ECO:0000255" key="1">
    <source>
        <dbReference type="HAMAP-Rule" id="MF_00736"/>
    </source>
</evidence>
<evidence type="ECO:0000305" key="2"/>
<feature type="chain" id="PRO_0000104246" description="Large ribosomal subunit protein uL11">
    <location>
        <begin position="1"/>
        <end position="147"/>
    </location>
</feature>